<comment type="function">
    <text evidence="1">Translocates 4-amino-4-deoxy-L-arabinose-phosphoundecaprenol (alpha-L-Ara4N-phosphoundecaprenol) from the cytoplasmic to the periplasmic side of the inner membrane.</text>
</comment>
<comment type="pathway">
    <text evidence="1">Bacterial outer membrane biogenesis; lipopolysaccharide biosynthesis.</text>
</comment>
<comment type="subunit">
    <text evidence="1">Heterodimer of ArnE and ArnF.</text>
</comment>
<comment type="subcellular location">
    <subcellularLocation>
        <location evidence="1">Cell inner membrane</location>
        <topology evidence="1">Multi-pass membrane protein</topology>
    </subcellularLocation>
</comment>
<comment type="similarity">
    <text evidence="1">Belongs to the ArnF family.</text>
</comment>
<comment type="sequence caution" evidence="2">
    <conflict type="erroneous initiation">
        <sequence resource="EMBL-CDS" id="CAR03688"/>
    </conflict>
</comment>
<dbReference type="EMBL" id="CU928161">
    <property type="protein sequence ID" value="CAR03688.2"/>
    <property type="status" value="ALT_INIT"/>
    <property type="molecule type" value="Genomic_DNA"/>
</dbReference>
<dbReference type="RefSeq" id="WP_000523876.1">
    <property type="nucleotide sequence ID" value="NC_011742.1"/>
</dbReference>
<dbReference type="KEGG" id="ecz:ECS88_2409"/>
<dbReference type="HOGENOM" id="CLU_1243704_0_0_6"/>
<dbReference type="UniPathway" id="UPA00030"/>
<dbReference type="Proteomes" id="UP000000747">
    <property type="component" value="Chromosome"/>
</dbReference>
<dbReference type="GO" id="GO:0005886">
    <property type="term" value="C:plasma membrane"/>
    <property type="evidence" value="ECO:0007669"/>
    <property type="project" value="UniProtKB-SubCell"/>
</dbReference>
<dbReference type="GO" id="GO:1901505">
    <property type="term" value="F:carbohydrate derivative transmembrane transporter activity"/>
    <property type="evidence" value="ECO:0007669"/>
    <property type="project" value="InterPro"/>
</dbReference>
<dbReference type="GO" id="GO:0009245">
    <property type="term" value="P:lipid A biosynthetic process"/>
    <property type="evidence" value="ECO:0007669"/>
    <property type="project" value="UniProtKB-UniRule"/>
</dbReference>
<dbReference type="GO" id="GO:0009103">
    <property type="term" value="P:lipopolysaccharide biosynthetic process"/>
    <property type="evidence" value="ECO:0007669"/>
    <property type="project" value="UniProtKB-UniRule"/>
</dbReference>
<dbReference type="FunFam" id="1.10.3730.20:FF:000003">
    <property type="entry name" value="Probable 4-amino-4-deoxy-L-arabinose-phosphoundecaprenol flippase subunit ArnF"/>
    <property type="match status" value="1"/>
</dbReference>
<dbReference type="Gene3D" id="1.10.3730.20">
    <property type="match status" value="1"/>
</dbReference>
<dbReference type="HAMAP" id="MF_00538">
    <property type="entry name" value="Flippase_ArnF"/>
    <property type="match status" value="1"/>
</dbReference>
<dbReference type="InterPro" id="IPR022832">
    <property type="entry name" value="Flippase_ArnF"/>
</dbReference>
<dbReference type="InterPro" id="IPR000390">
    <property type="entry name" value="Small_drug/metabolite_transptr"/>
</dbReference>
<dbReference type="NCBIfam" id="NF002816">
    <property type="entry name" value="PRK02971.1-2"/>
    <property type="match status" value="1"/>
</dbReference>
<dbReference type="PANTHER" id="PTHR30561:SF9">
    <property type="entry name" value="4-AMINO-4-DEOXY-L-ARABINOSE-PHOSPHOUNDECAPRENOL FLIPPASE SUBUNIT ARNF-RELATED"/>
    <property type="match status" value="1"/>
</dbReference>
<dbReference type="PANTHER" id="PTHR30561">
    <property type="entry name" value="SMR FAMILY PROTON-DEPENDENT DRUG EFFLUX TRANSPORTER SUGE"/>
    <property type="match status" value="1"/>
</dbReference>
<dbReference type="SUPFAM" id="SSF103481">
    <property type="entry name" value="Multidrug resistance efflux transporter EmrE"/>
    <property type="match status" value="1"/>
</dbReference>
<sequence length="128" mass="14075">MGLMWGLFSVIIASAAQLSMGFAASHLPPMTHLWDFIAALLAFGLDARILLLGLLGYLLSVFCWYKTLHKLALSKAYALLSMSYVLVWIASMVLPGWEGTFSLKALLGVACIMSGLMLIFLPTTKQRY</sequence>
<gene>
    <name evidence="1" type="primary">arnF</name>
    <name type="ordered locus">ECS88_2409</name>
</gene>
<evidence type="ECO:0000255" key="1">
    <source>
        <dbReference type="HAMAP-Rule" id="MF_00538"/>
    </source>
</evidence>
<evidence type="ECO:0000305" key="2"/>
<organism>
    <name type="scientific">Escherichia coli O45:K1 (strain S88 / ExPEC)</name>
    <dbReference type="NCBI Taxonomy" id="585035"/>
    <lineage>
        <taxon>Bacteria</taxon>
        <taxon>Pseudomonadati</taxon>
        <taxon>Pseudomonadota</taxon>
        <taxon>Gammaproteobacteria</taxon>
        <taxon>Enterobacterales</taxon>
        <taxon>Enterobacteriaceae</taxon>
        <taxon>Escherichia</taxon>
    </lineage>
</organism>
<feature type="chain" id="PRO_0000382002" description="Probable 4-amino-4-deoxy-L-arabinose-phosphoundecaprenol flippase subunit ArnF">
    <location>
        <begin position="1"/>
        <end position="128"/>
    </location>
</feature>
<feature type="topological domain" description="Cytoplasmic" evidence="1">
    <location>
        <begin position="1"/>
        <end position="2"/>
    </location>
</feature>
<feature type="transmembrane region" description="Helical" evidence="1">
    <location>
        <begin position="3"/>
        <end position="23"/>
    </location>
</feature>
<feature type="topological domain" description="Periplasmic" evidence="1">
    <location>
        <begin position="24"/>
        <end position="35"/>
    </location>
</feature>
<feature type="transmembrane region" description="Helical" evidence="1">
    <location>
        <begin position="36"/>
        <end position="56"/>
    </location>
</feature>
<feature type="topological domain" description="Cytoplasmic" evidence="1">
    <location>
        <begin position="57"/>
        <end position="76"/>
    </location>
</feature>
<feature type="transmembrane region" description="Helical" evidence="1">
    <location>
        <begin position="77"/>
        <end position="97"/>
    </location>
</feature>
<feature type="topological domain" description="Periplasmic" evidence="1">
    <location>
        <begin position="98"/>
        <end position="100"/>
    </location>
</feature>
<feature type="transmembrane region" description="Helical" evidence="1">
    <location>
        <begin position="101"/>
        <end position="121"/>
    </location>
</feature>
<feature type="topological domain" description="Cytoplasmic" evidence="1">
    <location>
        <begin position="122"/>
        <end position="128"/>
    </location>
</feature>
<name>ARNF_ECO45</name>
<keyword id="KW-0997">Cell inner membrane</keyword>
<keyword id="KW-1003">Cell membrane</keyword>
<keyword id="KW-0441">Lipid A biosynthesis</keyword>
<keyword id="KW-0444">Lipid biosynthesis</keyword>
<keyword id="KW-0443">Lipid metabolism</keyword>
<keyword id="KW-0448">Lipopolysaccharide biosynthesis</keyword>
<keyword id="KW-0472">Membrane</keyword>
<keyword id="KW-1185">Reference proteome</keyword>
<keyword id="KW-0812">Transmembrane</keyword>
<keyword id="KW-1133">Transmembrane helix</keyword>
<keyword id="KW-0813">Transport</keyword>
<reference key="1">
    <citation type="journal article" date="2009" name="PLoS Genet.">
        <title>Organised genome dynamics in the Escherichia coli species results in highly diverse adaptive paths.</title>
        <authorList>
            <person name="Touchon M."/>
            <person name="Hoede C."/>
            <person name="Tenaillon O."/>
            <person name="Barbe V."/>
            <person name="Baeriswyl S."/>
            <person name="Bidet P."/>
            <person name="Bingen E."/>
            <person name="Bonacorsi S."/>
            <person name="Bouchier C."/>
            <person name="Bouvet O."/>
            <person name="Calteau A."/>
            <person name="Chiapello H."/>
            <person name="Clermont O."/>
            <person name="Cruveiller S."/>
            <person name="Danchin A."/>
            <person name="Diard M."/>
            <person name="Dossat C."/>
            <person name="Karoui M.E."/>
            <person name="Frapy E."/>
            <person name="Garry L."/>
            <person name="Ghigo J.M."/>
            <person name="Gilles A.M."/>
            <person name="Johnson J."/>
            <person name="Le Bouguenec C."/>
            <person name="Lescat M."/>
            <person name="Mangenot S."/>
            <person name="Martinez-Jehanne V."/>
            <person name="Matic I."/>
            <person name="Nassif X."/>
            <person name="Oztas S."/>
            <person name="Petit M.A."/>
            <person name="Pichon C."/>
            <person name="Rouy Z."/>
            <person name="Ruf C.S."/>
            <person name="Schneider D."/>
            <person name="Tourret J."/>
            <person name="Vacherie B."/>
            <person name="Vallenet D."/>
            <person name="Medigue C."/>
            <person name="Rocha E.P.C."/>
            <person name="Denamur E."/>
        </authorList>
    </citation>
    <scope>NUCLEOTIDE SEQUENCE [LARGE SCALE GENOMIC DNA]</scope>
    <source>
        <strain>S88 / ExPEC</strain>
    </source>
</reference>
<protein>
    <recommendedName>
        <fullName evidence="1">Probable 4-amino-4-deoxy-L-arabinose-phosphoundecaprenol flippase subunit ArnF</fullName>
        <shortName evidence="1">L-Ara4N-phosphoundecaprenol flippase subunit ArnF</shortName>
    </recommendedName>
    <alternativeName>
        <fullName evidence="1">Undecaprenyl phosphate-aminoarabinose flippase subunit ArnF</fullName>
    </alternativeName>
</protein>
<proteinExistence type="inferred from homology"/>
<accession>B7MG26</accession>